<feature type="chain" id="PRO_1000199866" description="Urease subunit gamma">
    <location>
        <begin position="1"/>
        <end position="100"/>
    </location>
</feature>
<protein>
    <recommendedName>
        <fullName evidence="1">Urease subunit gamma</fullName>
        <ecNumber evidence="1">3.5.1.5</ecNumber>
    </recommendedName>
    <alternativeName>
        <fullName evidence="1">Urea amidohydrolase subunit gamma</fullName>
    </alternativeName>
</protein>
<name>URE3_KOCRD</name>
<evidence type="ECO:0000255" key="1">
    <source>
        <dbReference type="HAMAP-Rule" id="MF_00739"/>
    </source>
</evidence>
<proteinExistence type="inferred from homology"/>
<comment type="catalytic activity">
    <reaction evidence="1">
        <text>urea + 2 H2O + H(+) = hydrogencarbonate + 2 NH4(+)</text>
        <dbReference type="Rhea" id="RHEA:20557"/>
        <dbReference type="ChEBI" id="CHEBI:15377"/>
        <dbReference type="ChEBI" id="CHEBI:15378"/>
        <dbReference type="ChEBI" id="CHEBI:16199"/>
        <dbReference type="ChEBI" id="CHEBI:17544"/>
        <dbReference type="ChEBI" id="CHEBI:28938"/>
        <dbReference type="EC" id="3.5.1.5"/>
    </reaction>
</comment>
<comment type="pathway">
    <text evidence="1">Nitrogen metabolism; urea degradation; CO(2) and NH(3) from urea (urease route): step 1/1.</text>
</comment>
<comment type="subunit">
    <text evidence="1">Heterotrimer of UreA (gamma), UreB (beta) and UreC (alpha) subunits. Three heterotrimers associate to form the active enzyme.</text>
</comment>
<comment type="subcellular location">
    <subcellularLocation>
        <location evidence="1">Cytoplasm</location>
    </subcellularLocation>
</comment>
<comment type="similarity">
    <text evidence="1">Belongs to the urease gamma subunit family.</text>
</comment>
<dbReference type="EC" id="3.5.1.5" evidence="1"/>
<dbReference type="EMBL" id="AP009152">
    <property type="protein sequence ID" value="BAG30520.1"/>
    <property type="molecule type" value="Genomic_DNA"/>
</dbReference>
<dbReference type="RefSeq" id="WP_012399241.1">
    <property type="nucleotide sequence ID" value="NC_010617.1"/>
</dbReference>
<dbReference type="SMR" id="B2GI08"/>
<dbReference type="STRING" id="378753.KRH_21730"/>
<dbReference type="KEGG" id="krh:KRH_21730"/>
<dbReference type="eggNOG" id="COG0831">
    <property type="taxonomic scope" value="Bacteria"/>
</dbReference>
<dbReference type="HOGENOM" id="CLU_145825_1_0_11"/>
<dbReference type="OrthoDB" id="9797217at2"/>
<dbReference type="UniPathway" id="UPA00258">
    <property type="reaction ID" value="UER00370"/>
</dbReference>
<dbReference type="Proteomes" id="UP000008838">
    <property type="component" value="Chromosome"/>
</dbReference>
<dbReference type="GO" id="GO:0005737">
    <property type="term" value="C:cytoplasm"/>
    <property type="evidence" value="ECO:0007669"/>
    <property type="project" value="UniProtKB-SubCell"/>
</dbReference>
<dbReference type="GO" id="GO:0016151">
    <property type="term" value="F:nickel cation binding"/>
    <property type="evidence" value="ECO:0007669"/>
    <property type="project" value="InterPro"/>
</dbReference>
<dbReference type="GO" id="GO:0009039">
    <property type="term" value="F:urease activity"/>
    <property type="evidence" value="ECO:0007669"/>
    <property type="project" value="UniProtKB-UniRule"/>
</dbReference>
<dbReference type="GO" id="GO:0043419">
    <property type="term" value="P:urea catabolic process"/>
    <property type="evidence" value="ECO:0007669"/>
    <property type="project" value="UniProtKB-UniRule"/>
</dbReference>
<dbReference type="CDD" id="cd00390">
    <property type="entry name" value="Urease_gamma"/>
    <property type="match status" value="1"/>
</dbReference>
<dbReference type="Gene3D" id="3.30.280.10">
    <property type="entry name" value="Urease, gamma-like subunit"/>
    <property type="match status" value="1"/>
</dbReference>
<dbReference type="HAMAP" id="MF_00739">
    <property type="entry name" value="Urease_gamma"/>
    <property type="match status" value="1"/>
</dbReference>
<dbReference type="InterPro" id="IPR012010">
    <property type="entry name" value="Urease_gamma"/>
</dbReference>
<dbReference type="InterPro" id="IPR002026">
    <property type="entry name" value="Urease_gamma/gamma-beta_su"/>
</dbReference>
<dbReference type="InterPro" id="IPR036463">
    <property type="entry name" value="Urease_gamma_sf"/>
</dbReference>
<dbReference type="InterPro" id="IPR050069">
    <property type="entry name" value="Urease_subunit"/>
</dbReference>
<dbReference type="NCBIfam" id="NF009712">
    <property type="entry name" value="PRK13241.1"/>
    <property type="match status" value="1"/>
</dbReference>
<dbReference type="NCBIfam" id="TIGR00193">
    <property type="entry name" value="urease_gam"/>
    <property type="match status" value="1"/>
</dbReference>
<dbReference type="PANTHER" id="PTHR33569">
    <property type="entry name" value="UREASE"/>
    <property type="match status" value="1"/>
</dbReference>
<dbReference type="PANTHER" id="PTHR33569:SF1">
    <property type="entry name" value="UREASE"/>
    <property type="match status" value="1"/>
</dbReference>
<dbReference type="Pfam" id="PF00547">
    <property type="entry name" value="Urease_gamma"/>
    <property type="match status" value="1"/>
</dbReference>
<dbReference type="PIRSF" id="PIRSF001223">
    <property type="entry name" value="Urease_gamma"/>
    <property type="match status" value="1"/>
</dbReference>
<dbReference type="SUPFAM" id="SSF54111">
    <property type="entry name" value="Urease, gamma-subunit"/>
    <property type="match status" value="1"/>
</dbReference>
<gene>
    <name evidence="1" type="primary">ureA</name>
    <name type="ordered locus">KRH_21730</name>
</gene>
<accession>B2GI08</accession>
<keyword id="KW-0963">Cytoplasm</keyword>
<keyword id="KW-0378">Hydrolase</keyword>
<keyword id="KW-1185">Reference proteome</keyword>
<sequence>MHLQPKDQEKLLVVVAADLARRRQARGLKLNHPEAIAIITYELLEGARDGRTVAELMSWGSTILSREDVMEGVPEMIPDVQVEATFPDGTKLVTVHDPIR</sequence>
<organism>
    <name type="scientific">Kocuria rhizophila (strain ATCC 9341 / DSM 348 / NBRC 103217 / DC2201)</name>
    <dbReference type="NCBI Taxonomy" id="378753"/>
    <lineage>
        <taxon>Bacteria</taxon>
        <taxon>Bacillati</taxon>
        <taxon>Actinomycetota</taxon>
        <taxon>Actinomycetes</taxon>
        <taxon>Micrococcales</taxon>
        <taxon>Micrococcaceae</taxon>
        <taxon>Kocuria</taxon>
    </lineage>
</organism>
<reference key="1">
    <citation type="journal article" date="2008" name="J. Bacteriol.">
        <title>Complete genome sequence of the soil actinomycete Kocuria rhizophila.</title>
        <authorList>
            <person name="Takarada H."/>
            <person name="Sekine M."/>
            <person name="Kosugi H."/>
            <person name="Matsuo Y."/>
            <person name="Fujisawa T."/>
            <person name="Omata S."/>
            <person name="Kishi E."/>
            <person name="Shimizu A."/>
            <person name="Tsukatani N."/>
            <person name="Tanikawa S."/>
            <person name="Fujita N."/>
            <person name="Harayama S."/>
        </authorList>
    </citation>
    <scope>NUCLEOTIDE SEQUENCE [LARGE SCALE GENOMIC DNA]</scope>
    <source>
        <strain>ATCC 9341 / DSM 348 / NBRC 103217 / DC2201</strain>
    </source>
</reference>